<feature type="chain" id="PRO_0000262775" description="4-hydroxybenzoate octaprenyltransferase">
    <location>
        <begin position="1"/>
        <end position="290"/>
    </location>
</feature>
<feature type="transmembrane region" description="Helical" evidence="1">
    <location>
        <begin position="23"/>
        <end position="43"/>
    </location>
</feature>
<feature type="transmembrane region" description="Helical" evidence="1">
    <location>
        <begin position="46"/>
        <end position="66"/>
    </location>
</feature>
<feature type="transmembrane region" description="Helical" evidence="1">
    <location>
        <begin position="96"/>
        <end position="116"/>
    </location>
</feature>
<feature type="transmembrane region" description="Helical" evidence="1">
    <location>
        <begin position="118"/>
        <end position="138"/>
    </location>
</feature>
<feature type="transmembrane region" description="Helical" evidence="1">
    <location>
        <begin position="141"/>
        <end position="161"/>
    </location>
</feature>
<feature type="transmembrane region" description="Helical" evidence="1">
    <location>
        <begin position="169"/>
        <end position="189"/>
    </location>
</feature>
<feature type="transmembrane region" description="Helical" evidence="1">
    <location>
        <begin position="212"/>
        <end position="232"/>
    </location>
</feature>
<feature type="transmembrane region" description="Helical" evidence="1">
    <location>
        <begin position="235"/>
        <end position="255"/>
    </location>
</feature>
<feature type="transmembrane region" description="Helical" evidence="1">
    <location>
        <begin position="265"/>
        <end position="285"/>
    </location>
</feature>
<accession>Q6F9N8</accession>
<gene>
    <name evidence="1" type="primary">ubiA</name>
    <name type="ordered locus">ACIAD2455</name>
</gene>
<organism>
    <name type="scientific">Acinetobacter baylyi (strain ATCC 33305 / BD413 / ADP1)</name>
    <dbReference type="NCBI Taxonomy" id="62977"/>
    <lineage>
        <taxon>Bacteria</taxon>
        <taxon>Pseudomonadati</taxon>
        <taxon>Pseudomonadota</taxon>
        <taxon>Gammaproteobacteria</taxon>
        <taxon>Moraxellales</taxon>
        <taxon>Moraxellaceae</taxon>
        <taxon>Acinetobacter</taxon>
    </lineage>
</organism>
<proteinExistence type="inferred from homology"/>
<keyword id="KW-0997">Cell inner membrane</keyword>
<keyword id="KW-1003">Cell membrane</keyword>
<keyword id="KW-0460">Magnesium</keyword>
<keyword id="KW-0472">Membrane</keyword>
<keyword id="KW-0808">Transferase</keyword>
<keyword id="KW-0812">Transmembrane</keyword>
<keyword id="KW-1133">Transmembrane helix</keyword>
<keyword id="KW-0831">Ubiquinone biosynthesis</keyword>
<protein>
    <recommendedName>
        <fullName evidence="1">4-hydroxybenzoate octaprenyltransferase</fullName>
        <ecNumber evidence="1">2.5.1.39</ecNumber>
    </recommendedName>
    <alternativeName>
        <fullName evidence="1">4-HB polyprenyltransferase</fullName>
    </alternativeName>
</protein>
<dbReference type="EC" id="2.5.1.39" evidence="1"/>
<dbReference type="EMBL" id="CR543861">
    <property type="protein sequence ID" value="CAG69226.1"/>
    <property type="status" value="ALT_INIT"/>
    <property type="molecule type" value="Genomic_DNA"/>
</dbReference>
<dbReference type="SMR" id="Q6F9N8"/>
<dbReference type="STRING" id="202950.GCA_001485005_01541"/>
<dbReference type="KEGG" id="aci:ACIAD2455"/>
<dbReference type="eggNOG" id="COG0382">
    <property type="taxonomic scope" value="Bacteria"/>
</dbReference>
<dbReference type="HOGENOM" id="CLU_034879_1_0_6"/>
<dbReference type="UniPathway" id="UPA00232"/>
<dbReference type="Proteomes" id="UP000000430">
    <property type="component" value="Chromosome"/>
</dbReference>
<dbReference type="GO" id="GO:0005886">
    <property type="term" value="C:plasma membrane"/>
    <property type="evidence" value="ECO:0007669"/>
    <property type="project" value="UniProtKB-SubCell"/>
</dbReference>
<dbReference type="GO" id="GO:0008412">
    <property type="term" value="F:4-hydroxybenzoate polyprenyltransferase activity"/>
    <property type="evidence" value="ECO:0007669"/>
    <property type="project" value="UniProtKB-UniRule"/>
</dbReference>
<dbReference type="GO" id="GO:0006744">
    <property type="term" value="P:ubiquinone biosynthetic process"/>
    <property type="evidence" value="ECO:0007669"/>
    <property type="project" value="UniProtKB-UniRule"/>
</dbReference>
<dbReference type="CDD" id="cd13959">
    <property type="entry name" value="PT_UbiA_COQ2"/>
    <property type="match status" value="1"/>
</dbReference>
<dbReference type="FunFam" id="1.10.357.140:FF:000002">
    <property type="entry name" value="4-hydroxybenzoate octaprenyltransferase"/>
    <property type="match status" value="1"/>
</dbReference>
<dbReference type="FunFam" id="1.20.120.1780:FF:000001">
    <property type="entry name" value="4-hydroxybenzoate octaprenyltransferase"/>
    <property type="match status" value="1"/>
</dbReference>
<dbReference type="Gene3D" id="1.10.357.140">
    <property type="entry name" value="UbiA prenyltransferase"/>
    <property type="match status" value="1"/>
</dbReference>
<dbReference type="Gene3D" id="1.20.120.1780">
    <property type="entry name" value="UbiA prenyltransferase"/>
    <property type="match status" value="1"/>
</dbReference>
<dbReference type="HAMAP" id="MF_01635">
    <property type="entry name" value="UbiA"/>
    <property type="match status" value="1"/>
</dbReference>
<dbReference type="InterPro" id="IPR006370">
    <property type="entry name" value="HB_polyprenyltransferase-like"/>
</dbReference>
<dbReference type="InterPro" id="IPR039653">
    <property type="entry name" value="Prenyltransferase"/>
</dbReference>
<dbReference type="InterPro" id="IPR000537">
    <property type="entry name" value="UbiA_prenyltransferase"/>
</dbReference>
<dbReference type="InterPro" id="IPR044878">
    <property type="entry name" value="UbiA_sf"/>
</dbReference>
<dbReference type="NCBIfam" id="TIGR01474">
    <property type="entry name" value="ubiA_proteo"/>
    <property type="match status" value="1"/>
</dbReference>
<dbReference type="PANTHER" id="PTHR11048:SF28">
    <property type="entry name" value="4-HYDROXYBENZOATE POLYPRENYLTRANSFERASE, MITOCHONDRIAL"/>
    <property type="match status" value="1"/>
</dbReference>
<dbReference type="PANTHER" id="PTHR11048">
    <property type="entry name" value="PRENYLTRANSFERASES"/>
    <property type="match status" value="1"/>
</dbReference>
<dbReference type="Pfam" id="PF01040">
    <property type="entry name" value="UbiA"/>
    <property type="match status" value="1"/>
</dbReference>
<name>UBIA_ACIAD</name>
<sequence length="290" mass="33400">MQPISWRERLQAYYYLCRFDKPIGTELVFWPTMWALWIASDGYPDLKMFVVMTLGVLFMRAAGCAINDFADRKVDGHVARTKQRPLATGIIRPIEAIWVFLALVAASAALLLFLPIETFYWSFGALFLAFIYPFMKRYTHLPQVFLGAAFSWAIPMAYTATGQAPDLTCWLLYFGNLAWTVAYDTQYAITDREYDLKIGVKSTAILFNRFDIPIISTLQLSSLLLIGMALYIENLLFPWGIIGLVVVAVDFIYQWTKTKNRDPQLCFWAFRHNRWVGLIIFLAILAAFRF</sequence>
<reference key="1">
    <citation type="journal article" date="2004" name="Nucleic Acids Res.">
        <title>Unique features revealed by the genome sequence of Acinetobacter sp. ADP1, a versatile and naturally transformation competent bacterium.</title>
        <authorList>
            <person name="Barbe V."/>
            <person name="Vallenet D."/>
            <person name="Fonknechten N."/>
            <person name="Kreimeyer A."/>
            <person name="Oztas S."/>
            <person name="Labarre L."/>
            <person name="Cruveiller S."/>
            <person name="Robert C."/>
            <person name="Duprat S."/>
            <person name="Wincker P."/>
            <person name="Ornston L.N."/>
            <person name="Weissenbach J."/>
            <person name="Marliere P."/>
            <person name="Cohen G.N."/>
            <person name="Medigue C."/>
        </authorList>
    </citation>
    <scope>NUCLEOTIDE SEQUENCE [LARGE SCALE GENOMIC DNA]</scope>
    <source>
        <strain>ATCC 33305 / BD413 / ADP1</strain>
    </source>
</reference>
<evidence type="ECO:0000255" key="1">
    <source>
        <dbReference type="HAMAP-Rule" id="MF_01635"/>
    </source>
</evidence>
<evidence type="ECO:0000305" key="2"/>
<comment type="function">
    <text evidence="1">Catalyzes the prenylation of para-hydroxybenzoate (PHB) with an all-trans polyprenyl group. Mediates the second step in the final reaction sequence of ubiquinone-8 (UQ-8) biosynthesis, which is the condensation of the polyisoprenoid side chain with PHB, generating the first membrane-bound Q intermediate 3-octaprenyl-4-hydroxybenzoate.</text>
</comment>
<comment type="catalytic activity">
    <reaction evidence="1">
        <text>all-trans-octaprenyl diphosphate + 4-hydroxybenzoate = 4-hydroxy-3-(all-trans-octaprenyl)benzoate + diphosphate</text>
        <dbReference type="Rhea" id="RHEA:27782"/>
        <dbReference type="ChEBI" id="CHEBI:1617"/>
        <dbReference type="ChEBI" id="CHEBI:17879"/>
        <dbReference type="ChEBI" id="CHEBI:33019"/>
        <dbReference type="ChEBI" id="CHEBI:57711"/>
        <dbReference type="EC" id="2.5.1.39"/>
    </reaction>
</comment>
<comment type="cofactor">
    <cofactor evidence="1">
        <name>Mg(2+)</name>
        <dbReference type="ChEBI" id="CHEBI:18420"/>
    </cofactor>
</comment>
<comment type="pathway">
    <text evidence="1">Cofactor biosynthesis; ubiquinone biosynthesis.</text>
</comment>
<comment type="subcellular location">
    <subcellularLocation>
        <location evidence="1">Cell inner membrane</location>
        <topology evidence="1">Multi-pass membrane protein</topology>
    </subcellularLocation>
</comment>
<comment type="similarity">
    <text evidence="1">Belongs to the UbiA prenyltransferase family.</text>
</comment>
<comment type="sequence caution" evidence="2">
    <conflict type="erroneous initiation">
        <sequence resource="EMBL-CDS" id="CAG69226"/>
    </conflict>
</comment>